<organism>
    <name type="scientific">Anaeromyxobacter sp. (strain Fw109-5)</name>
    <dbReference type="NCBI Taxonomy" id="404589"/>
    <lineage>
        <taxon>Bacteria</taxon>
        <taxon>Pseudomonadati</taxon>
        <taxon>Myxococcota</taxon>
        <taxon>Myxococcia</taxon>
        <taxon>Myxococcales</taxon>
        <taxon>Cystobacterineae</taxon>
        <taxon>Anaeromyxobacteraceae</taxon>
        <taxon>Anaeromyxobacter</taxon>
    </lineage>
</organism>
<comment type="function">
    <text evidence="1">Promotes RNA polymerase assembly. Latches the N- and C-terminal regions of the beta' subunit thereby facilitating its interaction with the beta and alpha subunits.</text>
</comment>
<comment type="catalytic activity">
    <reaction evidence="1">
        <text>RNA(n) + a ribonucleoside 5'-triphosphate = RNA(n+1) + diphosphate</text>
        <dbReference type="Rhea" id="RHEA:21248"/>
        <dbReference type="Rhea" id="RHEA-COMP:14527"/>
        <dbReference type="Rhea" id="RHEA-COMP:17342"/>
        <dbReference type="ChEBI" id="CHEBI:33019"/>
        <dbReference type="ChEBI" id="CHEBI:61557"/>
        <dbReference type="ChEBI" id="CHEBI:140395"/>
        <dbReference type="EC" id="2.7.7.6"/>
    </reaction>
</comment>
<comment type="subunit">
    <text evidence="1">The RNAP catalytic core consists of 2 alpha, 1 beta, 1 beta' and 1 omega subunit. When a sigma factor is associated with the core the holoenzyme is formed, which can initiate transcription.</text>
</comment>
<comment type="similarity">
    <text evidence="1">Belongs to the RNA polymerase subunit omega family.</text>
</comment>
<feature type="chain" id="PRO_1000005885" description="DNA-directed RNA polymerase subunit omega">
    <location>
        <begin position="1"/>
        <end position="88"/>
    </location>
</feature>
<sequence>MARVTVEDCLPLVDNRFALVLLATKRTRQLMAGARPLQGHAKNKAPVVALREIATGKVRFDRSVRDALSGKFDKEKSTIPAGQTRTLR</sequence>
<gene>
    <name evidence="1" type="primary">rpoZ</name>
    <name type="ordered locus">Anae109_3711</name>
</gene>
<keyword id="KW-0240">DNA-directed RNA polymerase</keyword>
<keyword id="KW-0548">Nucleotidyltransferase</keyword>
<keyword id="KW-1185">Reference proteome</keyword>
<keyword id="KW-0804">Transcription</keyword>
<keyword id="KW-0808">Transferase</keyword>
<name>RPOZ_ANADF</name>
<accession>A7HGP4</accession>
<evidence type="ECO:0000255" key="1">
    <source>
        <dbReference type="HAMAP-Rule" id="MF_00366"/>
    </source>
</evidence>
<reference key="1">
    <citation type="journal article" date="2015" name="Genome Announc.">
        <title>Complete genome sequence of Anaeromyxobacter sp. Fw109-5, an anaerobic, metal-reducing bacterium isolated from a contaminated subsurface environment.</title>
        <authorList>
            <person name="Hwang C."/>
            <person name="Copeland A."/>
            <person name="Lucas S."/>
            <person name="Lapidus A."/>
            <person name="Barry K."/>
            <person name="Glavina Del Rio T."/>
            <person name="Dalin E."/>
            <person name="Tice H."/>
            <person name="Pitluck S."/>
            <person name="Sims D."/>
            <person name="Brettin T."/>
            <person name="Bruce D.C."/>
            <person name="Detter J.C."/>
            <person name="Han C.S."/>
            <person name="Schmutz J."/>
            <person name="Larimer F.W."/>
            <person name="Land M.L."/>
            <person name="Hauser L.J."/>
            <person name="Kyrpides N."/>
            <person name="Lykidis A."/>
            <person name="Richardson P."/>
            <person name="Belieav A."/>
            <person name="Sanford R.A."/>
            <person name="Loeffler F.E."/>
            <person name="Fields M.W."/>
        </authorList>
    </citation>
    <scope>NUCLEOTIDE SEQUENCE [LARGE SCALE GENOMIC DNA]</scope>
    <source>
        <strain>Fw109-5</strain>
    </source>
</reference>
<dbReference type="EC" id="2.7.7.6" evidence="1"/>
<dbReference type="EMBL" id="CP000769">
    <property type="protein sequence ID" value="ABS27890.1"/>
    <property type="molecule type" value="Genomic_DNA"/>
</dbReference>
<dbReference type="RefSeq" id="WP_012098517.1">
    <property type="nucleotide sequence ID" value="NC_009675.1"/>
</dbReference>
<dbReference type="SMR" id="A7HGP4"/>
<dbReference type="STRING" id="404589.Anae109_3711"/>
<dbReference type="KEGG" id="afw:Anae109_3711"/>
<dbReference type="eggNOG" id="COG1758">
    <property type="taxonomic scope" value="Bacteria"/>
</dbReference>
<dbReference type="HOGENOM" id="CLU_125406_5_1_7"/>
<dbReference type="OrthoDB" id="9796300at2"/>
<dbReference type="Proteomes" id="UP000006382">
    <property type="component" value="Chromosome"/>
</dbReference>
<dbReference type="GO" id="GO:0000428">
    <property type="term" value="C:DNA-directed RNA polymerase complex"/>
    <property type="evidence" value="ECO:0007669"/>
    <property type="project" value="UniProtKB-KW"/>
</dbReference>
<dbReference type="GO" id="GO:0003677">
    <property type="term" value="F:DNA binding"/>
    <property type="evidence" value="ECO:0007669"/>
    <property type="project" value="UniProtKB-UniRule"/>
</dbReference>
<dbReference type="GO" id="GO:0003899">
    <property type="term" value="F:DNA-directed RNA polymerase activity"/>
    <property type="evidence" value="ECO:0007669"/>
    <property type="project" value="UniProtKB-UniRule"/>
</dbReference>
<dbReference type="GO" id="GO:0006351">
    <property type="term" value="P:DNA-templated transcription"/>
    <property type="evidence" value="ECO:0007669"/>
    <property type="project" value="UniProtKB-UniRule"/>
</dbReference>
<dbReference type="Gene3D" id="3.90.940.10">
    <property type="match status" value="1"/>
</dbReference>
<dbReference type="HAMAP" id="MF_00366">
    <property type="entry name" value="RNApol_bact_RpoZ"/>
    <property type="match status" value="1"/>
</dbReference>
<dbReference type="InterPro" id="IPR003716">
    <property type="entry name" value="DNA-dir_RNA_pol_omega"/>
</dbReference>
<dbReference type="InterPro" id="IPR006110">
    <property type="entry name" value="Pol_omega/Rpo6/RPB6"/>
</dbReference>
<dbReference type="InterPro" id="IPR036161">
    <property type="entry name" value="RPB6/omega-like_sf"/>
</dbReference>
<dbReference type="NCBIfam" id="TIGR00690">
    <property type="entry name" value="rpoZ"/>
    <property type="match status" value="1"/>
</dbReference>
<dbReference type="PANTHER" id="PTHR34476">
    <property type="entry name" value="DNA-DIRECTED RNA POLYMERASE SUBUNIT OMEGA"/>
    <property type="match status" value="1"/>
</dbReference>
<dbReference type="PANTHER" id="PTHR34476:SF1">
    <property type="entry name" value="DNA-DIRECTED RNA POLYMERASE SUBUNIT OMEGA"/>
    <property type="match status" value="1"/>
</dbReference>
<dbReference type="Pfam" id="PF01192">
    <property type="entry name" value="RNA_pol_Rpb6"/>
    <property type="match status" value="1"/>
</dbReference>
<dbReference type="SMART" id="SM01409">
    <property type="entry name" value="RNA_pol_Rpb6"/>
    <property type="match status" value="1"/>
</dbReference>
<dbReference type="SUPFAM" id="SSF63562">
    <property type="entry name" value="RPB6/omega subunit-like"/>
    <property type="match status" value="1"/>
</dbReference>
<proteinExistence type="inferred from homology"/>
<protein>
    <recommendedName>
        <fullName evidence="1">DNA-directed RNA polymerase subunit omega</fullName>
        <shortName evidence="1">RNAP omega subunit</shortName>
        <ecNumber evidence="1">2.7.7.6</ecNumber>
    </recommendedName>
    <alternativeName>
        <fullName evidence="1">RNA polymerase omega subunit</fullName>
    </alternativeName>
    <alternativeName>
        <fullName evidence="1">Transcriptase subunit omega</fullName>
    </alternativeName>
</protein>